<name>SYM_ACISJ</name>
<gene>
    <name evidence="1" type="primary">metG</name>
    <name type="ordered locus">Ajs_3483</name>
</gene>
<reference key="1">
    <citation type="submission" date="2006-12" db="EMBL/GenBank/DDBJ databases">
        <title>Complete sequence of chromosome 1 of Acidovorax sp. JS42.</title>
        <authorList>
            <person name="Copeland A."/>
            <person name="Lucas S."/>
            <person name="Lapidus A."/>
            <person name="Barry K."/>
            <person name="Detter J.C."/>
            <person name="Glavina del Rio T."/>
            <person name="Dalin E."/>
            <person name="Tice H."/>
            <person name="Pitluck S."/>
            <person name="Chertkov O."/>
            <person name="Brettin T."/>
            <person name="Bruce D."/>
            <person name="Han C."/>
            <person name="Tapia R."/>
            <person name="Gilna P."/>
            <person name="Schmutz J."/>
            <person name="Larimer F."/>
            <person name="Land M."/>
            <person name="Hauser L."/>
            <person name="Kyrpides N."/>
            <person name="Kim E."/>
            <person name="Stahl D."/>
            <person name="Richardson P."/>
        </authorList>
    </citation>
    <scope>NUCLEOTIDE SEQUENCE [LARGE SCALE GENOMIC DNA]</scope>
    <source>
        <strain>JS42</strain>
    </source>
</reference>
<dbReference type="EC" id="6.1.1.10" evidence="1"/>
<dbReference type="EMBL" id="CP000539">
    <property type="protein sequence ID" value="ABM43596.1"/>
    <property type="molecule type" value="Genomic_DNA"/>
</dbReference>
<dbReference type="SMR" id="A1WBH1"/>
<dbReference type="STRING" id="232721.Ajs_3483"/>
<dbReference type="KEGG" id="ajs:Ajs_3483"/>
<dbReference type="eggNOG" id="COG0073">
    <property type="taxonomic scope" value="Bacteria"/>
</dbReference>
<dbReference type="eggNOG" id="COG0143">
    <property type="taxonomic scope" value="Bacteria"/>
</dbReference>
<dbReference type="HOGENOM" id="CLU_009710_7_0_4"/>
<dbReference type="Proteomes" id="UP000000645">
    <property type="component" value="Chromosome"/>
</dbReference>
<dbReference type="GO" id="GO:0005829">
    <property type="term" value="C:cytosol"/>
    <property type="evidence" value="ECO:0007669"/>
    <property type="project" value="TreeGrafter"/>
</dbReference>
<dbReference type="GO" id="GO:0005524">
    <property type="term" value="F:ATP binding"/>
    <property type="evidence" value="ECO:0007669"/>
    <property type="project" value="UniProtKB-UniRule"/>
</dbReference>
<dbReference type="GO" id="GO:0046872">
    <property type="term" value="F:metal ion binding"/>
    <property type="evidence" value="ECO:0007669"/>
    <property type="project" value="UniProtKB-KW"/>
</dbReference>
<dbReference type="GO" id="GO:0004825">
    <property type="term" value="F:methionine-tRNA ligase activity"/>
    <property type="evidence" value="ECO:0007669"/>
    <property type="project" value="UniProtKB-UniRule"/>
</dbReference>
<dbReference type="GO" id="GO:0000049">
    <property type="term" value="F:tRNA binding"/>
    <property type="evidence" value="ECO:0007669"/>
    <property type="project" value="UniProtKB-KW"/>
</dbReference>
<dbReference type="GO" id="GO:0006431">
    <property type="term" value="P:methionyl-tRNA aminoacylation"/>
    <property type="evidence" value="ECO:0007669"/>
    <property type="project" value="UniProtKB-UniRule"/>
</dbReference>
<dbReference type="CDD" id="cd07957">
    <property type="entry name" value="Anticodon_Ia_Met"/>
    <property type="match status" value="1"/>
</dbReference>
<dbReference type="CDD" id="cd00814">
    <property type="entry name" value="MetRS_core"/>
    <property type="match status" value="1"/>
</dbReference>
<dbReference type="CDD" id="cd02800">
    <property type="entry name" value="tRNA_bind_EcMetRS_like"/>
    <property type="match status" value="1"/>
</dbReference>
<dbReference type="FunFam" id="2.20.28.20:FF:000001">
    <property type="entry name" value="Methionine--tRNA ligase"/>
    <property type="match status" value="1"/>
</dbReference>
<dbReference type="FunFam" id="2.40.50.140:FF:000042">
    <property type="entry name" value="Methionine--tRNA ligase"/>
    <property type="match status" value="1"/>
</dbReference>
<dbReference type="Gene3D" id="3.40.50.620">
    <property type="entry name" value="HUPs"/>
    <property type="match status" value="1"/>
</dbReference>
<dbReference type="Gene3D" id="1.10.730.10">
    <property type="entry name" value="Isoleucyl-tRNA Synthetase, Domain 1"/>
    <property type="match status" value="1"/>
</dbReference>
<dbReference type="Gene3D" id="2.20.28.20">
    <property type="entry name" value="Methionyl-tRNA synthetase, Zn-domain"/>
    <property type="match status" value="1"/>
</dbReference>
<dbReference type="Gene3D" id="2.40.50.140">
    <property type="entry name" value="Nucleic acid-binding proteins"/>
    <property type="match status" value="1"/>
</dbReference>
<dbReference type="HAMAP" id="MF_00098">
    <property type="entry name" value="Met_tRNA_synth_type1"/>
    <property type="match status" value="1"/>
</dbReference>
<dbReference type="InterPro" id="IPR001412">
    <property type="entry name" value="aa-tRNA-synth_I_CS"/>
</dbReference>
<dbReference type="InterPro" id="IPR041872">
    <property type="entry name" value="Anticodon_Met"/>
</dbReference>
<dbReference type="InterPro" id="IPR004495">
    <property type="entry name" value="Met-tRNA-synth_bsu_C"/>
</dbReference>
<dbReference type="InterPro" id="IPR023458">
    <property type="entry name" value="Met-tRNA_ligase_1"/>
</dbReference>
<dbReference type="InterPro" id="IPR014758">
    <property type="entry name" value="Met-tRNA_synth"/>
</dbReference>
<dbReference type="InterPro" id="IPR015413">
    <property type="entry name" value="Methionyl/Leucyl_tRNA_Synth"/>
</dbReference>
<dbReference type="InterPro" id="IPR033911">
    <property type="entry name" value="MetRS_core"/>
</dbReference>
<dbReference type="InterPro" id="IPR029038">
    <property type="entry name" value="MetRS_Zn"/>
</dbReference>
<dbReference type="InterPro" id="IPR012340">
    <property type="entry name" value="NA-bd_OB-fold"/>
</dbReference>
<dbReference type="InterPro" id="IPR014729">
    <property type="entry name" value="Rossmann-like_a/b/a_fold"/>
</dbReference>
<dbReference type="InterPro" id="IPR002547">
    <property type="entry name" value="tRNA-bd_dom"/>
</dbReference>
<dbReference type="InterPro" id="IPR009080">
    <property type="entry name" value="tRNAsynth_Ia_anticodon-bd"/>
</dbReference>
<dbReference type="NCBIfam" id="TIGR00398">
    <property type="entry name" value="metG"/>
    <property type="match status" value="1"/>
</dbReference>
<dbReference type="NCBIfam" id="TIGR00399">
    <property type="entry name" value="metG_C_term"/>
    <property type="match status" value="1"/>
</dbReference>
<dbReference type="NCBIfam" id="NF001100">
    <property type="entry name" value="PRK00133.1"/>
    <property type="match status" value="1"/>
</dbReference>
<dbReference type="PANTHER" id="PTHR45765">
    <property type="entry name" value="METHIONINE--TRNA LIGASE"/>
    <property type="match status" value="1"/>
</dbReference>
<dbReference type="PANTHER" id="PTHR45765:SF1">
    <property type="entry name" value="METHIONINE--TRNA LIGASE, CYTOPLASMIC"/>
    <property type="match status" value="1"/>
</dbReference>
<dbReference type="Pfam" id="PF19303">
    <property type="entry name" value="Anticodon_3"/>
    <property type="match status" value="1"/>
</dbReference>
<dbReference type="Pfam" id="PF09334">
    <property type="entry name" value="tRNA-synt_1g"/>
    <property type="match status" value="1"/>
</dbReference>
<dbReference type="Pfam" id="PF01588">
    <property type="entry name" value="tRNA_bind"/>
    <property type="match status" value="1"/>
</dbReference>
<dbReference type="PRINTS" id="PR01041">
    <property type="entry name" value="TRNASYNTHMET"/>
</dbReference>
<dbReference type="SUPFAM" id="SSF47323">
    <property type="entry name" value="Anticodon-binding domain of a subclass of class I aminoacyl-tRNA synthetases"/>
    <property type="match status" value="1"/>
</dbReference>
<dbReference type="SUPFAM" id="SSF57770">
    <property type="entry name" value="Methionyl-tRNA synthetase (MetRS), Zn-domain"/>
    <property type="match status" value="1"/>
</dbReference>
<dbReference type="SUPFAM" id="SSF50249">
    <property type="entry name" value="Nucleic acid-binding proteins"/>
    <property type="match status" value="1"/>
</dbReference>
<dbReference type="SUPFAM" id="SSF52374">
    <property type="entry name" value="Nucleotidylyl transferase"/>
    <property type="match status" value="1"/>
</dbReference>
<dbReference type="PROSITE" id="PS00178">
    <property type="entry name" value="AA_TRNA_LIGASE_I"/>
    <property type="match status" value="1"/>
</dbReference>
<dbReference type="PROSITE" id="PS50886">
    <property type="entry name" value="TRBD"/>
    <property type="match status" value="1"/>
</dbReference>
<sequence length="688" mass="76638">MTARKIFVTTALPYANGNFHIGHIMEYIQADTWVRAQRMQGNAVNFVGADDAHGAPIMIAAEKAGKTPQQFVADIAAGRKQYLDGFHIAFDNWSNTDSPENHELSQQIYLDLKAAGFIETRTIEQFFDPEKNMFLPDRFIKGECPRCHAKDQYGDNCEVCSSVYAPTDLINPYSALSGAKPVLKTSEHFFFKLSDPRAVEFLTEWTQNGQHVQPEVAAKIKEWFGTRTNPDGTTSEGLDDWDISRDAPYFGIEIPDAPGKYFYVWLDAPVGYLASLKNLLNKRGEDYDAYMADPQLEQYHFIGKDIITFHTLFWPAMLKFSGRKTPTKICVHGFMTVNNGEKMSKSRGTGLDPLKYLALGMNPEWLRYYLGAKLNGKNEDIDFNPEDFMARVNSDLIGKYVNIASRAAGFIFKRFGGKLGEVSADGQALLAQLREQAGPIVAAYEARDTARAVRETMLLCDRVNSYVDANKPWELAKQEGMEARLQDVCTTCIEAFRILTIYLKPILPQVAAEVARFLIVPPEQFAEVAQPLGAGHQIGQYQHLMQRVTQEQLDALFEPPAPAVEKVIPGGEEIAPTITIDDFAKVDLRIAKIVKCEAVEGSTKLLRLTLDVGEGQTRNVFSGIASMYKPKDLQGKLTVMVANLAPRKMKFGLSEGMVLAASHADEKAHPGIFVLEPFPGAQPGMRIH</sequence>
<accession>A1WBH1</accession>
<comment type="function">
    <text evidence="1">Is required not only for elongation of protein synthesis but also for the initiation of all mRNA translation through initiator tRNA(fMet) aminoacylation.</text>
</comment>
<comment type="catalytic activity">
    <reaction evidence="1">
        <text>tRNA(Met) + L-methionine + ATP = L-methionyl-tRNA(Met) + AMP + diphosphate</text>
        <dbReference type="Rhea" id="RHEA:13481"/>
        <dbReference type="Rhea" id="RHEA-COMP:9667"/>
        <dbReference type="Rhea" id="RHEA-COMP:9698"/>
        <dbReference type="ChEBI" id="CHEBI:30616"/>
        <dbReference type="ChEBI" id="CHEBI:33019"/>
        <dbReference type="ChEBI" id="CHEBI:57844"/>
        <dbReference type="ChEBI" id="CHEBI:78442"/>
        <dbReference type="ChEBI" id="CHEBI:78530"/>
        <dbReference type="ChEBI" id="CHEBI:456215"/>
        <dbReference type="EC" id="6.1.1.10"/>
    </reaction>
</comment>
<comment type="cofactor">
    <cofactor evidence="1">
        <name>Zn(2+)</name>
        <dbReference type="ChEBI" id="CHEBI:29105"/>
    </cofactor>
    <text evidence="1">Binds 1 zinc ion per subunit.</text>
</comment>
<comment type="subunit">
    <text evidence="1">Homodimer.</text>
</comment>
<comment type="subcellular location">
    <subcellularLocation>
        <location evidence="1">Cytoplasm</location>
    </subcellularLocation>
</comment>
<comment type="similarity">
    <text evidence="1">Belongs to the class-I aminoacyl-tRNA synthetase family. MetG type 1 subfamily.</text>
</comment>
<evidence type="ECO:0000255" key="1">
    <source>
        <dbReference type="HAMAP-Rule" id="MF_00098"/>
    </source>
</evidence>
<protein>
    <recommendedName>
        <fullName evidence="1">Methionine--tRNA ligase</fullName>
        <ecNumber evidence="1">6.1.1.10</ecNumber>
    </recommendedName>
    <alternativeName>
        <fullName evidence="1">Methionyl-tRNA synthetase</fullName>
        <shortName evidence="1">MetRS</shortName>
    </alternativeName>
</protein>
<organism>
    <name type="scientific">Acidovorax sp. (strain JS42)</name>
    <dbReference type="NCBI Taxonomy" id="232721"/>
    <lineage>
        <taxon>Bacteria</taxon>
        <taxon>Pseudomonadati</taxon>
        <taxon>Pseudomonadota</taxon>
        <taxon>Betaproteobacteria</taxon>
        <taxon>Burkholderiales</taxon>
        <taxon>Comamonadaceae</taxon>
        <taxon>Acidovorax</taxon>
    </lineage>
</organism>
<keyword id="KW-0030">Aminoacyl-tRNA synthetase</keyword>
<keyword id="KW-0067">ATP-binding</keyword>
<keyword id="KW-0963">Cytoplasm</keyword>
<keyword id="KW-0436">Ligase</keyword>
<keyword id="KW-0479">Metal-binding</keyword>
<keyword id="KW-0547">Nucleotide-binding</keyword>
<keyword id="KW-0648">Protein biosynthesis</keyword>
<keyword id="KW-0694">RNA-binding</keyword>
<keyword id="KW-0820">tRNA-binding</keyword>
<keyword id="KW-0862">Zinc</keyword>
<proteinExistence type="inferred from homology"/>
<feature type="chain" id="PRO_0000331772" description="Methionine--tRNA ligase">
    <location>
        <begin position="1"/>
        <end position="688"/>
    </location>
</feature>
<feature type="domain" description="tRNA-binding" evidence="1">
    <location>
        <begin position="582"/>
        <end position="688"/>
    </location>
</feature>
<feature type="short sequence motif" description="'HIGH' region">
    <location>
        <begin position="13"/>
        <end position="23"/>
    </location>
</feature>
<feature type="short sequence motif" description="'KMSKS' region">
    <location>
        <begin position="342"/>
        <end position="346"/>
    </location>
</feature>
<feature type="binding site" evidence="1">
    <location>
        <position position="144"/>
    </location>
    <ligand>
        <name>Zn(2+)</name>
        <dbReference type="ChEBI" id="CHEBI:29105"/>
    </ligand>
</feature>
<feature type="binding site" evidence="1">
    <location>
        <position position="147"/>
    </location>
    <ligand>
        <name>Zn(2+)</name>
        <dbReference type="ChEBI" id="CHEBI:29105"/>
    </ligand>
</feature>
<feature type="binding site" evidence="1">
    <location>
        <position position="157"/>
    </location>
    <ligand>
        <name>Zn(2+)</name>
        <dbReference type="ChEBI" id="CHEBI:29105"/>
    </ligand>
</feature>
<feature type="binding site" evidence="1">
    <location>
        <position position="160"/>
    </location>
    <ligand>
        <name>Zn(2+)</name>
        <dbReference type="ChEBI" id="CHEBI:29105"/>
    </ligand>
</feature>
<feature type="binding site" evidence="1">
    <location>
        <position position="345"/>
    </location>
    <ligand>
        <name>ATP</name>
        <dbReference type="ChEBI" id="CHEBI:30616"/>
    </ligand>
</feature>